<sequence length="376" mass="41991">MADNEQSSIVCDNGSGMVKAGFSGDDAPRHVFPSIVGRPKNMQAMMGSANKTVYVGDEAQSKRGVLSLKYPIEHGIVTNWDDMEKIWHHTFYNDVRVNPEQHNVLLTEAPMNPKQNREKMTQIMFETFNVPSLYIGIQAVLSLYSSGRTTGIVLDAGDGVTHTVPIYEGYSLPHAVRRVDMAGRDLTEYLMKIMMETGTTFTTTAEKEIVRNVKEQLCYVALDFEEEMTNSAKSANEEAFELPDGNVMMVGNQRFRCPEVLFKPSLIGLDEAPGFPEMVYQSINKCDIDVRRELYGNIVLSGGSTMFLNLPERLAKEISNLAPSSIKPKVVAPPERKYSVWIGGSILSSLTTFQTMWVKKSEYDESGPSIVHNKCF</sequence>
<reference key="1">
    <citation type="journal article" date="1994" name="Gene">
        <title>Cloning and sequencing of the Leishmania major actin-encoding gene.</title>
        <authorList>
            <person name="de Arruda M.V."/>
            <person name="Matsudaira P."/>
        </authorList>
    </citation>
    <scope>NUCLEOTIDE SEQUENCE</scope>
    <source>
        <strain>MHOM/IR/83/Lt252 / CC-1</strain>
    </source>
</reference>
<proteinExistence type="evidence at protein level"/>
<feature type="chain" id="PRO_0000088952" description="Actin">
    <location>
        <begin position="1"/>
        <end position="376"/>
    </location>
</feature>
<feature type="strand" evidence="5">
    <location>
        <begin position="9"/>
        <end position="13"/>
    </location>
</feature>
<feature type="strand" evidence="5">
    <location>
        <begin position="15"/>
        <end position="22"/>
    </location>
</feature>
<feature type="strand" evidence="5">
    <location>
        <begin position="29"/>
        <end position="33"/>
    </location>
</feature>
<feature type="strand" evidence="5">
    <location>
        <begin position="36"/>
        <end position="39"/>
    </location>
</feature>
<feature type="strand" evidence="3">
    <location>
        <begin position="45"/>
        <end position="49"/>
    </location>
</feature>
<feature type="helix" evidence="5">
    <location>
        <begin position="57"/>
        <end position="61"/>
    </location>
</feature>
<feature type="turn" evidence="5">
    <location>
        <begin position="62"/>
        <end position="64"/>
    </location>
</feature>
<feature type="strand" evidence="5">
    <location>
        <begin position="65"/>
        <end position="69"/>
    </location>
</feature>
<feature type="strand" evidence="5">
    <location>
        <begin position="71"/>
        <end position="73"/>
    </location>
</feature>
<feature type="strand" evidence="4">
    <location>
        <begin position="76"/>
        <end position="78"/>
    </location>
</feature>
<feature type="helix" evidence="5">
    <location>
        <begin position="80"/>
        <end position="91"/>
    </location>
</feature>
<feature type="turn" evidence="5">
    <location>
        <begin position="92"/>
        <end position="94"/>
    </location>
</feature>
<feature type="helix" evidence="5">
    <location>
        <begin position="99"/>
        <end position="101"/>
    </location>
</feature>
<feature type="strand" evidence="5">
    <location>
        <begin position="104"/>
        <end position="108"/>
    </location>
</feature>
<feature type="helix" evidence="5">
    <location>
        <begin position="114"/>
        <end position="126"/>
    </location>
</feature>
<feature type="strand" evidence="5">
    <location>
        <begin position="131"/>
        <end position="137"/>
    </location>
</feature>
<feature type="helix" evidence="5">
    <location>
        <begin position="138"/>
        <end position="145"/>
    </location>
</feature>
<feature type="strand" evidence="5">
    <location>
        <begin position="149"/>
        <end position="156"/>
    </location>
</feature>
<feature type="strand" evidence="5">
    <location>
        <begin position="161"/>
        <end position="167"/>
    </location>
</feature>
<feature type="helix" evidence="5">
    <location>
        <begin position="173"/>
        <end position="175"/>
    </location>
</feature>
<feature type="strand" evidence="5">
    <location>
        <begin position="177"/>
        <end position="180"/>
    </location>
</feature>
<feature type="helix" evidence="5">
    <location>
        <begin position="183"/>
        <end position="194"/>
    </location>
</feature>
<feature type="helix" evidence="5">
    <location>
        <begin position="195"/>
        <end position="197"/>
    </location>
</feature>
<feature type="helix" evidence="5">
    <location>
        <begin position="204"/>
        <end position="216"/>
    </location>
</feature>
<feature type="helix" evidence="5">
    <location>
        <begin position="224"/>
        <end position="234"/>
    </location>
</feature>
<feature type="strand" evidence="5">
    <location>
        <begin position="238"/>
        <end position="241"/>
    </location>
</feature>
<feature type="strand" evidence="5">
    <location>
        <begin position="247"/>
        <end position="250"/>
    </location>
</feature>
<feature type="helix" evidence="5">
    <location>
        <begin position="253"/>
        <end position="256"/>
    </location>
</feature>
<feature type="helix" evidence="5">
    <location>
        <begin position="258"/>
        <end position="261"/>
    </location>
</feature>
<feature type="helix" evidence="5">
    <location>
        <begin position="264"/>
        <end position="267"/>
    </location>
</feature>
<feature type="helix" evidence="5">
    <location>
        <begin position="275"/>
        <end position="284"/>
    </location>
</feature>
<feature type="helix" evidence="5">
    <location>
        <begin position="288"/>
        <end position="295"/>
    </location>
</feature>
<feature type="strand" evidence="5">
    <location>
        <begin position="298"/>
        <end position="302"/>
    </location>
</feature>
<feature type="helix" evidence="5">
    <location>
        <begin position="303"/>
        <end position="305"/>
    </location>
</feature>
<feature type="helix" evidence="5">
    <location>
        <begin position="310"/>
        <end position="321"/>
    </location>
</feature>
<feature type="helix" evidence="5">
    <location>
        <begin position="336"/>
        <end position="338"/>
    </location>
</feature>
<feature type="helix" evidence="5">
    <location>
        <begin position="339"/>
        <end position="347"/>
    </location>
</feature>
<feature type="helix" evidence="5">
    <location>
        <begin position="352"/>
        <end position="355"/>
    </location>
</feature>
<feature type="strand" evidence="5">
    <location>
        <begin position="357"/>
        <end position="359"/>
    </location>
</feature>
<feature type="helix" evidence="5">
    <location>
        <begin position="360"/>
        <end position="366"/>
    </location>
</feature>
<feature type="helix" evidence="5">
    <location>
        <begin position="370"/>
        <end position="374"/>
    </location>
</feature>
<evidence type="ECO:0000250" key="1">
    <source>
        <dbReference type="UniProtKB" id="Q8I4X0"/>
    </source>
</evidence>
<evidence type="ECO:0000305" key="2"/>
<evidence type="ECO:0007829" key="3">
    <source>
        <dbReference type="PDB" id="7Q8B"/>
    </source>
</evidence>
<evidence type="ECO:0007829" key="4">
    <source>
        <dbReference type="PDB" id="7Q8C"/>
    </source>
</evidence>
<evidence type="ECO:0007829" key="5">
    <source>
        <dbReference type="PDB" id="8C47"/>
    </source>
</evidence>
<comment type="function">
    <text>Actins are highly conserved proteins that are involved in various types of cell motility and are ubiquitously expressed in all eukaryotic cells.</text>
</comment>
<comment type="catalytic activity">
    <reaction evidence="1">
        <text>ATP + H2O = ADP + phosphate + H(+)</text>
        <dbReference type="Rhea" id="RHEA:13065"/>
        <dbReference type="ChEBI" id="CHEBI:15377"/>
        <dbReference type="ChEBI" id="CHEBI:15378"/>
        <dbReference type="ChEBI" id="CHEBI:30616"/>
        <dbReference type="ChEBI" id="CHEBI:43474"/>
        <dbReference type="ChEBI" id="CHEBI:456216"/>
    </reaction>
</comment>
<comment type="subcellular location">
    <subcellularLocation>
        <location>Cytoplasm</location>
        <location>Cytoskeleton</location>
    </subcellularLocation>
</comment>
<comment type="similarity">
    <text evidence="2">Belongs to the actin family.</text>
</comment>
<keyword id="KW-0002">3D-structure</keyword>
<keyword id="KW-0067">ATP-binding</keyword>
<keyword id="KW-0963">Cytoplasm</keyword>
<keyword id="KW-0206">Cytoskeleton</keyword>
<keyword id="KW-0378">Hydrolase</keyword>
<keyword id="KW-0547">Nucleotide-binding</keyword>
<organism>
    <name type="scientific">Leishmania major</name>
    <dbReference type="NCBI Taxonomy" id="5664"/>
    <lineage>
        <taxon>Eukaryota</taxon>
        <taxon>Discoba</taxon>
        <taxon>Euglenozoa</taxon>
        <taxon>Kinetoplastea</taxon>
        <taxon>Metakinetoplastina</taxon>
        <taxon>Trypanosomatida</taxon>
        <taxon>Trypanosomatidae</taxon>
        <taxon>Leishmaniinae</taxon>
        <taxon>Leishmania</taxon>
    </lineage>
</organism>
<name>ACT_LEIMA</name>
<protein>
    <recommendedName>
        <fullName>Actin</fullName>
        <ecNumber evidence="1">3.6.4.-</ecNumber>
    </recommendedName>
</protein>
<accession>P45520</accession>
<dbReference type="EC" id="3.6.4.-" evidence="1"/>
<dbReference type="EMBL" id="L16961">
    <property type="protein sequence ID" value="AAA19789.1"/>
    <property type="molecule type" value="Unassigned_DNA"/>
</dbReference>
<dbReference type="PDB" id="7Q8B">
    <property type="method" value="EM"/>
    <property type="resolution" value="3.30 A"/>
    <property type="chains" value="A/B/C/D/E=1-376"/>
</dbReference>
<dbReference type="PDB" id="7Q8C">
    <property type="method" value="EM"/>
    <property type="resolution" value="2.72 A"/>
    <property type="chains" value="A/B/C/D/E=1-376"/>
</dbReference>
<dbReference type="PDB" id="7Q8S">
    <property type="method" value="EM"/>
    <property type="resolution" value="3.40 A"/>
    <property type="chains" value="A/C/D/E/F=1-376"/>
</dbReference>
<dbReference type="PDB" id="8C47">
    <property type="method" value="X-ray"/>
    <property type="resolution" value="2.20 A"/>
    <property type="chains" value="A=2-376"/>
</dbReference>
<dbReference type="PDBsum" id="7Q8B"/>
<dbReference type="PDBsum" id="7Q8C"/>
<dbReference type="PDBsum" id="7Q8S"/>
<dbReference type="PDBsum" id="8C47"/>
<dbReference type="EMDB" id="EMD-13863"/>
<dbReference type="SMR" id="P45520"/>
<dbReference type="VEuPathDB" id="TriTrypDB:LmjF.04.1230"/>
<dbReference type="VEuPathDB" id="TriTrypDB:LMJFC_040019500"/>
<dbReference type="VEuPathDB" id="TriTrypDB:LMJLV39_040018100"/>
<dbReference type="VEuPathDB" id="TriTrypDB:LMJSD75_040018400"/>
<dbReference type="eggNOG" id="KOG0676">
    <property type="taxonomic scope" value="Eukaryota"/>
</dbReference>
<dbReference type="GO" id="GO:0005737">
    <property type="term" value="C:cytoplasm"/>
    <property type="evidence" value="ECO:0007669"/>
    <property type="project" value="UniProtKB-KW"/>
</dbReference>
<dbReference type="GO" id="GO:0005856">
    <property type="term" value="C:cytoskeleton"/>
    <property type="evidence" value="ECO:0007669"/>
    <property type="project" value="UniProtKB-SubCell"/>
</dbReference>
<dbReference type="GO" id="GO:0005524">
    <property type="term" value="F:ATP binding"/>
    <property type="evidence" value="ECO:0007669"/>
    <property type="project" value="UniProtKB-KW"/>
</dbReference>
<dbReference type="GO" id="GO:0016787">
    <property type="term" value="F:hydrolase activity"/>
    <property type="evidence" value="ECO:0007669"/>
    <property type="project" value="UniProtKB-KW"/>
</dbReference>
<dbReference type="FunFam" id="3.30.420.40:FF:000205">
    <property type="entry name" value="Actin, alpha skeletal muscle"/>
    <property type="match status" value="1"/>
</dbReference>
<dbReference type="FunFam" id="3.90.640.10:FF:000047">
    <property type="entry name" value="Actin, alpha skeletal muscle"/>
    <property type="match status" value="1"/>
</dbReference>
<dbReference type="FunFam" id="3.30.420.40:FF:000018">
    <property type="entry name" value="Actin-like protein (Centractin)"/>
    <property type="match status" value="1"/>
</dbReference>
<dbReference type="Gene3D" id="3.30.420.40">
    <property type="match status" value="2"/>
</dbReference>
<dbReference type="Gene3D" id="3.90.640.10">
    <property type="entry name" value="Actin, Chain A, domain 4"/>
    <property type="match status" value="1"/>
</dbReference>
<dbReference type="InterPro" id="IPR004000">
    <property type="entry name" value="Actin"/>
</dbReference>
<dbReference type="InterPro" id="IPR020902">
    <property type="entry name" value="Actin/actin-like_CS"/>
</dbReference>
<dbReference type="InterPro" id="IPR004001">
    <property type="entry name" value="Actin_CS"/>
</dbReference>
<dbReference type="InterPro" id="IPR043129">
    <property type="entry name" value="ATPase_NBD"/>
</dbReference>
<dbReference type="PANTHER" id="PTHR11937">
    <property type="entry name" value="ACTIN"/>
    <property type="match status" value="1"/>
</dbReference>
<dbReference type="Pfam" id="PF00022">
    <property type="entry name" value="Actin"/>
    <property type="match status" value="1"/>
</dbReference>
<dbReference type="PRINTS" id="PR00190">
    <property type="entry name" value="ACTIN"/>
</dbReference>
<dbReference type="SMART" id="SM00268">
    <property type="entry name" value="ACTIN"/>
    <property type="match status" value="1"/>
</dbReference>
<dbReference type="SUPFAM" id="SSF53067">
    <property type="entry name" value="Actin-like ATPase domain"/>
    <property type="match status" value="2"/>
</dbReference>
<dbReference type="PROSITE" id="PS00406">
    <property type="entry name" value="ACTINS_1"/>
    <property type="match status" value="1"/>
</dbReference>
<dbReference type="PROSITE" id="PS00432">
    <property type="entry name" value="ACTINS_2"/>
    <property type="match status" value="1"/>
</dbReference>
<dbReference type="PROSITE" id="PS01132">
    <property type="entry name" value="ACTINS_ACT_LIKE"/>
    <property type="match status" value="1"/>
</dbReference>